<proteinExistence type="inferred from homology"/>
<keyword id="KW-0150">Chloroplast</keyword>
<keyword id="KW-0934">Plastid</keyword>
<keyword id="KW-0687">Ribonucleoprotein</keyword>
<keyword id="KW-0689">Ribosomal protein</keyword>
<keyword id="KW-0694">RNA-binding</keyword>
<keyword id="KW-0699">rRNA-binding</keyword>
<protein>
    <recommendedName>
        <fullName evidence="1">Large ribosomal subunit protein bL20c</fullName>
    </recommendedName>
    <alternativeName>
        <fullName evidence="2">50S ribosomal protein L20, chloroplastic</fullName>
    </alternativeName>
</protein>
<dbReference type="EMBL" id="DQ422812">
    <property type="protein sequence ID" value="ABD62232.2"/>
    <property type="molecule type" value="Genomic_DNA"/>
</dbReference>
<dbReference type="RefSeq" id="YP_001019133.1">
    <property type="nucleotide sequence ID" value="NC_008822.1"/>
</dbReference>
<dbReference type="SMR" id="Q19V76"/>
<dbReference type="GeneID" id="4783291"/>
<dbReference type="GO" id="GO:0009507">
    <property type="term" value="C:chloroplast"/>
    <property type="evidence" value="ECO:0007669"/>
    <property type="project" value="UniProtKB-SubCell"/>
</dbReference>
<dbReference type="GO" id="GO:1990904">
    <property type="term" value="C:ribonucleoprotein complex"/>
    <property type="evidence" value="ECO:0007669"/>
    <property type="project" value="UniProtKB-KW"/>
</dbReference>
<dbReference type="GO" id="GO:0005840">
    <property type="term" value="C:ribosome"/>
    <property type="evidence" value="ECO:0007669"/>
    <property type="project" value="UniProtKB-KW"/>
</dbReference>
<dbReference type="GO" id="GO:0019843">
    <property type="term" value="F:rRNA binding"/>
    <property type="evidence" value="ECO:0007669"/>
    <property type="project" value="UniProtKB-UniRule"/>
</dbReference>
<dbReference type="GO" id="GO:0003735">
    <property type="term" value="F:structural constituent of ribosome"/>
    <property type="evidence" value="ECO:0007669"/>
    <property type="project" value="InterPro"/>
</dbReference>
<dbReference type="GO" id="GO:0000027">
    <property type="term" value="P:ribosomal large subunit assembly"/>
    <property type="evidence" value="ECO:0007669"/>
    <property type="project" value="UniProtKB-UniRule"/>
</dbReference>
<dbReference type="GO" id="GO:0006412">
    <property type="term" value="P:translation"/>
    <property type="evidence" value="ECO:0007669"/>
    <property type="project" value="InterPro"/>
</dbReference>
<dbReference type="CDD" id="cd07026">
    <property type="entry name" value="Ribosomal_L20"/>
    <property type="match status" value="1"/>
</dbReference>
<dbReference type="FunFam" id="1.10.1900.20:FF:000001">
    <property type="entry name" value="50S ribosomal protein L20"/>
    <property type="match status" value="1"/>
</dbReference>
<dbReference type="Gene3D" id="6.10.160.10">
    <property type="match status" value="1"/>
</dbReference>
<dbReference type="Gene3D" id="1.10.1900.20">
    <property type="entry name" value="Ribosomal protein L20"/>
    <property type="match status" value="1"/>
</dbReference>
<dbReference type="HAMAP" id="MF_00382">
    <property type="entry name" value="Ribosomal_bL20"/>
    <property type="match status" value="1"/>
</dbReference>
<dbReference type="InterPro" id="IPR005813">
    <property type="entry name" value="Ribosomal_bL20"/>
</dbReference>
<dbReference type="InterPro" id="IPR049946">
    <property type="entry name" value="RIBOSOMAL_L20_CS"/>
</dbReference>
<dbReference type="InterPro" id="IPR035566">
    <property type="entry name" value="Ribosomal_protein_bL20_C"/>
</dbReference>
<dbReference type="NCBIfam" id="TIGR01032">
    <property type="entry name" value="rplT_bact"/>
    <property type="match status" value="1"/>
</dbReference>
<dbReference type="PANTHER" id="PTHR10986">
    <property type="entry name" value="39S RIBOSOMAL PROTEIN L20"/>
    <property type="match status" value="1"/>
</dbReference>
<dbReference type="Pfam" id="PF00453">
    <property type="entry name" value="Ribosomal_L20"/>
    <property type="match status" value="1"/>
</dbReference>
<dbReference type="PRINTS" id="PR00062">
    <property type="entry name" value="RIBOSOMALL20"/>
</dbReference>
<dbReference type="SUPFAM" id="SSF74731">
    <property type="entry name" value="Ribosomal protein L20"/>
    <property type="match status" value="1"/>
</dbReference>
<dbReference type="PROSITE" id="PS00937">
    <property type="entry name" value="RIBOSOMAL_L20"/>
    <property type="match status" value="1"/>
</dbReference>
<comment type="function">
    <text evidence="1">Binds directly to 23S ribosomal RNA and is necessary for the in vitro assembly process of the 50S ribosomal subunit. It is not involved in the protein synthesizing functions of that subunit.</text>
</comment>
<comment type="subcellular location">
    <subcellularLocation>
        <location>Plastid</location>
        <location>Chloroplast</location>
    </subcellularLocation>
</comment>
<comment type="similarity">
    <text evidence="1">Belongs to the bacterial ribosomal protein bL20 family.</text>
</comment>
<reference key="1">
    <citation type="journal article" date="2007" name="BMC Biol.">
        <title>A clade uniting the green algae Mesostigma viride and Chlorokybus atmophyticus represents the deepest branch of the Streptophyta in chloroplast genome-based phylogenies.</title>
        <authorList>
            <person name="Lemieux C."/>
            <person name="Otis C."/>
            <person name="Turmel M."/>
        </authorList>
    </citation>
    <scope>NUCLEOTIDE SEQUENCE [LARGE SCALE GENOMIC DNA]</scope>
    <source>
        <strain>SAG 48.80</strain>
    </source>
</reference>
<name>RK20_CHLAT</name>
<organism>
    <name type="scientific">Chlorokybus atmophyticus</name>
    <name type="common">Soil alga</name>
    <dbReference type="NCBI Taxonomy" id="3144"/>
    <lineage>
        <taxon>Eukaryota</taxon>
        <taxon>Viridiplantae</taxon>
        <taxon>Streptophyta</taxon>
        <taxon>Chlorokybophyceae</taxon>
        <taxon>Chlorokybales</taxon>
        <taxon>Chlorokybaceae</taxon>
        <taxon>Chlorokybus</taxon>
    </lineage>
</organism>
<geneLocation type="chloroplast"/>
<feature type="chain" id="PRO_0000355495" description="Large ribosomal subunit protein bL20c">
    <location>
        <begin position="1"/>
        <end position="115"/>
    </location>
</feature>
<gene>
    <name evidence="1" type="primary">rpl20</name>
</gene>
<sequence>MTRVKRGYVARKRRKRVLQLTQGFRGAHSVLFRTANQQNIKALRYASRDRARRKRDFRRLWITRINAGARKQGLSYSQLMHRFKKCGILINRKVLAQLALLDTKTFNQLVFYTDL</sequence>
<accession>Q19V76</accession>
<evidence type="ECO:0000255" key="1">
    <source>
        <dbReference type="HAMAP-Rule" id="MF_00382"/>
    </source>
</evidence>
<evidence type="ECO:0000305" key="2"/>